<name>RPOA_SYNJA</name>
<feature type="chain" id="PRO_0000264561" description="DNA-directed RNA polymerase subunit alpha">
    <location>
        <begin position="1"/>
        <end position="331"/>
    </location>
</feature>
<feature type="region of interest" description="Alpha N-terminal domain (alpha-NTD)" evidence="1">
    <location>
        <begin position="1"/>
        <end position="246"/>
    </location>
</feature>
<feature type="region of interest" description="Alpha C-terminal domain (alpha-CTD)" evidence="1">
    <location>
        <begin position="256"/>
        <end position="331"/>
    </location>
</feature>
<proteinExistence type="inferred from homology"/>
<reference key="1">
    <citation type="journal article" date="2007" name="ISME J.">
        <title>Population level functional diversity in a microbial community revealed by comparative genomic and metagenomic analyses.</title>
        <authorList>
            <person name="Bhaya D."/>
            <person name="Grossman A.R."/>
            <person name="Steunou A.-S."/>
            <person name="Khuri N."/>
            <person name="Cohan F.M."/>
            <person name="Hamamura N."/>
            <person name="Melendrez M.C."/>
            <person name="Bateson M.M."/>
            <person name="Ward D.M."/>
            <person name="Heidelberg J.F."/>
        </authorList>
    </citation>
    <scope>NUCLEOTIDE SEQUENCE [LARGE SCALE GENOMIC DNA]</scope>
    <source>
        <strain>JA-3-3Ab</strain>
    </source>
</reference>
<accession>Q2JUJ5</accession>
<sequence>MMQTSRTLHNLGSKAASSAAPYQTECVESHQEANGVHYGKFALGPLERGQGITVGNALRRVLLSNLEGTAVTAVRIAGVTHEFSTVPGVREDVMEILLNMKELVLRSNAPDTQVGRLVAQGPGEVTAEKLQLPSEVEVINPRHHIATLAEGAILEMEFMIGRGRGYRAVDYSDSKSMAIDFLQIDSVFMPVRKVNYTVEAARVGQSLEKDRLILEIWTNGSLTPQEALSQAARILVGLFSPLQEVSFDTPPEPRQAEDNQKNQIPIEELQLSVRAYNCLKRAQINTVADLLVYTEEDLLEIKNFGQKSAEEVVQALKNRLGLTLPRERSKT</sequence>
<protein>
    <recommendedName>
        <fullName evidence="1">DNA-directed RNA polymerase subunit alpha</fullName>
        <shortName evidence="1">RNAP subunit alpha</shortName>
        <ecNumber evidence="1">2.7.7.6</ecNumber>
    </recommendedName>
    <alternativeName>
        <fullName evidence="1">RNA polymerase subunit alpha</fullName>
    </alternativeName>
    <alternativeName>
        <fullName evidence="1">Transcriptase subunit alpha</fullName>
    </alternativeName>
</protein>
<dbReference type="EC" id="2.7.7.6" evidence="1"/>
<dbReference type="EMBL" id="CP000239">
    <property type="protein sequence ID" value="ABC99619.1"/>
    <property type="molecule type" value="Genomic_DNA"/>
</dbReference>
<dbReference type="RefSeq" id="WP_011430297.1">
    <property type="nucleotide sequence ID" value="NC_007775.1"/>
</dbReference>
<dbReference type="SMR" id="Q2JUJ5"/>
<dbReference type="STRING" id="321327.CYA_1451"/>
<dbReference type="KEGG" id="cya:CYA_1451"/>
<dbReference type="eggNOG" id="COG0202">
    <property type="taxonomic scope" value="Bacteria"/>
</dbReference>
<dbReference type="HOGENOM" id="CLU_053084_0_1_3"/>
<dbReference type="OrthoDB" id="9805706at2"/>
<dbReference type="Proteomes" id="UP000008818">
    <property type="component" value="Chromosome"/>
</dbReference>
<dbReference type="GO" id="GO:0005737">
    <property type="term" value="C:cytoplasm"/>
    <property type="evidence" value="ECO:0007669"/>
    <property type="project" value="UniProtKB-ARBA"/>
</dbReference>
<dbReference type="GO" id="GO:0000428">
    <property type="term" value="C:DNA-directed RNA polymerase complex"/>
    <property type="evidence" value="ECO:0007669"/>
    <property type="project" value="UniProtKB-KW"/>
</dbReference>
<dbReference type="GO" id="GO:0003677">
    <property type="term" value="F:DNA binding"/>
    <property type="evidence" value="ECO:0007669"/>
    <property type="project" value="UniProtKB-UniRule"/>
</dbReference>
<dbReference type="GO" id="GO:0003899">
    <property type="term" value="F:DNA-directed RNA polymerase activity"/>
    <property type="evidence" value="ECO:0007669"/>
    <property type="project" value="UniProtKB-UniRule"/>
</dbReference>
<dbReference type="GO" id="GO:0046983">
    <property type="term" value="F:protein dimerization activity"/>
    <property type="evidence" value="ECO:0007669"/>
    <property type="project" value="InterPro"/>
</dbReference>
<dbReference type="GO" id="GO:0006351">
    <property type="term" value="P:DNA-templated transcription"/>
    <property type="evidence" value="ECO:0007669"/>
    <property type="project" value="UniProtKB-UniRule"/>
</dbReference>
<dbReference type="CDD" id="cd06928">
    <property type="entry name" value="RNAP_alpha_NTD"/>
    <property type="match status" value="1"/>
</dbReference>
<dbReference type="FunFam" id="2.170.120.12:FF:000001">
    <property type="entry name" value="DNA-directed RNA polymerase subunit alpha"/>
    <property type="match status" value="1"/>
</dbReference>
<dbReference type="Gene3D" id="1.10.150.20">
    <property type="entry name" value="5' to 3' exonuclease, C-terminal subdomain"/>
    <property type="match status" value="1"/>
</dbReference>
<dbReference type="Gene3D" id="2.170.120.12">
    <property type="entry name" value="DNA-directed RNA polymerase, insert domain"/>
    <property type="match status" value="1"/>
</dbReference>
<dbReference type="Gene3D" id="3.30.1360.10">
    <property type="entry name" value="RNA polymerase, RBP11-like subunit"/>
    <property type="match status" value="1"/>
</dbReference>
<dbReference type="HAMAP" id="MF_00059">
    <property type="entry name" value="RNApol_bact_RpoA"/>
    <property type="match status" value="1"/>
</dbReference>
<dbReference type="InterPro" id="IPR011262">
    <property type="entry name" value="DNA-dir_RNA_pol_insert"/>
</dbReference>
<dbReference type="InterPro" id="IPR011263">
    <property type="entry name" value="DNA-dir_RNA_pol_RpoA/D/Rpb3"/>
</dbReference>
<dbReference type="InterPro" id="IPR011773">
    <property type="entry name" value="DNA-dir_RpoA"/>
</dbReference>
<dbReference type="InterPro" id="IPR036603">
    <property type="entry name" value="RBP11-like"/>
</dbReference>
<dbReference type="InterPro" id="IPR011260">
    <property type="entry name" value="RNAP_asu_C"/>
</dbReference>
<dbReference type="InterPro" id="IPR036643">
    <property type="entry name" value="RNApol_insert_sf"/>
</dbReference>
<dbReference type="NCBIfam" id="NF003513">
    <property type="entry name" value="PRK05182.1-2"/>
    <property type="match status" value="1"/>
</dbReference>
<dbReference type="NCBIfam" id="NF003516">
    <property type="entry name" value="PRK05182.2-2"/>
    <property type="match status" value="1"/>
</dbReference>
<dbReference type="NCBIfam" id="NF003519">
    <property type="entry name" value="PRK05182.2-5"/>
    <property type="match status" value="1"/>
</dbReference>
<dbReference type="NCBIfam" id="TIGR02027">
    <property type="entry name" value="rpoA"/>
    <property type="match status" value="1"/>
</dbReference>
<dbReference type="Pfam" id="PF01000">
    <property type="entry name" value="RNA_pol_A_bac"/>
    <property type="match status" value="1"/>
</dbReference>
<dbReference type="Pfam" id="PF03118">
    <property type="entry name" value="RNA_pol_A_CTD"/>
    <property type="match status" value="1"/>
</dbReference>
<dbReference type="Pfam" id="PF01193">
    <property type="entry name" value="RNA_pol_L"/>
    <property type="match status" value="1"/>
</dbReference>
<dbReference type="SMART" id="SM00662">
    <property type="entry name" value="RPOLD"/>
    <property type="match status" value="1"/>
</dbReference>
<dbReference type="SUPFAM" id="SSF47789">
    <property type="entry name" value="C-terminal domain of RNA polymerase alpha subunit"/>
    <property type="match status" value="1"/>
</dbReference>
<dbReference type="SUPFAM" id="SSF56553">
    <property type="entry name" value="Insert subdomain of RNA polymerase alpha subunit"/>
    <property type="match status" value="1"/>
</dbReference>
<dbReference type="SUPFAM" id="SSF55257">
    <property type="entry name" value="RBP11-like subunits of RNA polymerase"/>
    <property type="match status" value="1"/>
</dbReference>
<gene>
    <name evidence="1" type="primary">rpoA</name>
    <name type="ordered locus">CYA_1451</name>
</gene>
<comment type="function">
    <text evidence="1">DNA-dependent RNA polymerase catalyzes the transcription of DNA into RNA using the four ribonucleoside triphosphates as substrates.</text>
</comment>
<comment type="catalytic activity">
    <reaction evidence="1">
        <text>RNA(n) + a ribonucleoside 5'-triphosphate = RNA(n+1) + diphosphate</text>
        <dbReference type="Rhea" id="RHEA:21248"/>
        <dbReference type="Rhea" id="RHEA-COMP:14527"/>
        <dbReference type="Rhea" id="RHEA-COMP:17342"/>
        <dbReference type="ChEBI" id="CHEBI:33019"/>
        <dbReference type="ChEBI" id="CHEBI:61557"/>
        <dbReference type="ChEBI" id="CHEBI:140395"/>
        <dbReference type="EC" id="2.7.7.6"/>
    </reaction>
</comment>
<comment type="subunit">
    <text evidence="1">In cyanobacteria the RNAP catalytic core is composed of 2 alpha, 1 beta, 1 beta', 1 gamma and 1 omega subunit. When a sigma factor is associated with the core the holoenzyme is formed, which can initiate transcription.</text>
</comment>
<comment type="domain">
    <text evidence="1">The N-terminal domain is essential for RNAP assembly and basal transcription, whereas the C-terminal domain is involved in interaction with transcriptional regulators and with upstream promoter elements.</text>
</comment>
<comment type="similarity">
    <text evidence="1">Belongs to the RNA polymerase alpha chain family.</text>
</comment>
<organism>
    <name type="scientific">Synechococcus sp. (strain JA-3-3Ab)</name>
    <name type="common">Cyanobacteria bacterium Yellowstone A-Prime</name>
    <dbReference type="NCBI Taxonomy" id="321327"/>
    <lineage>
        <taxon>Bacteria</taxon>
        <taxon>Bacillati</taxon>
        <taxon>Cyanobacteriota</taxon>
        <taxon>Cyanophyceae</taxon>
        <taxon>Synechococcales</taxon>
        <taxon>Synechococcaceae</taxon>
        <taxon>Synechococcus</taxon>
    </lineage>
</organism>
<keyword id="KW-0240">DNA-directed RNA polymerase</keyword>
<keyword id="KW-0548">Nucleotidyltransferase</keyword>
<keyword id="KW-0804">Transcription</keyword>
<keyword id="KW-0808">Transferase</keyword>
<evidence type="ECO:0000255" key="1">
    <source>
        <dbReference type="HAMAP-Rule" id="MF_00059"/>
    </source>
</evidence>